<keyword id="KW-0456">Lyase</keyword>
<keyword id="KW-0576">Peroxisome</keyword>
<keyword id="KW-1185">Reference proteome</keyword>
<proteinExistence type="evidence at transcript level"/>
<reference key="1">
    <citation type="journal article" date="2005" name="Nature">
        <title>The genome of the social amoeba Dictyostelium discoideum.</title>
        <authorList>
            <person name="Eichinger L."/>
            <person name="Pachebat J.A."/>
            <person name="Gloeckner G."/>
            <person name="Rajandream M.A."/>
            <person name="Sucgang R."/>
            <person name="Berriman M."/>
            <person name="Song J."/>
            <person name="Olsen R."/>
            <person name="Szafranski K."/>
            <person name="Xu Q."/>
            <person name="Tunggal B."/>
            <person name="Kummerfeld S."/>
            <person name="Madera M."/>
            <person name="Konfortov B.A."/>
            <person name="Rivero F."/>
            <person name="Bankier A.T."/>
            <person name="Lehmann R."/>
            <person name="Hamlin N."/>
            <person name="Davies R."/>
            <person name="Gaudet P."/>
            <person name="Fey P."/>
            <person name="Pilcher K."/>
            <person name="Chen G."/>
            <person name="Saunders D."/>
            <person name="Sodergren E.J."/>
            <person name="Davis P."/>
            <person name="Kerhornou A."/>
            <person name="Nie X."/>
            <person name="Hall N."/>
            <person name="Anjard C."/>
            <person name="Hemphill L."/>
            <person name="Bason N."/>
            <person name="Farbrother P."/>
            <person name="Desany B."/>
            <person name="Just E."/>
            <person name="Morio T."/>
            <person name="Rost R."/>
            <person name="Churcher C.M."/>
            <person name="Cooper J."/>
            <person name="Haydock S."/>
            <person name="van Driessche N."/>
            <person name="Cronin A."/>
            <person name="Goodhead I."/>
            <person name="Muzny D.M."/>
            <person name="Mourier T."/>
            <person name="Pain A."/>
            <person name="Lu M."/>
            <person name="Harper D."/>
            <person name="Lindsay R."/>
            <person name="Hauser H."/>
            <person name="James K.D."/>
            <person name="Quiles M."/>
            <person name="Madan Babu M."/>
            <person name="Saito T."/>
            <person name="Buchrieser C."/>
            <person name="Wardroper A."/>
            <person name="Felder M."/>
            <person name="Thangavelu M."/>
            <person name="Johnson D."/>
            <person name="Knights A."/>
            <person name="Loulseged H."/>
            <person name="Mungall K.L."/>
            <person name="Oliver K."/>
            <person name="Price C."/>
            <person name="Quail M.A."/>
            <person name="Urushihara H."/>
            <person name="Hernandez J."/>
            <person name="Rabbinowitsch E."/>
            <person name="Steffen D."/>
            <person name="Sanders M."/>
            <person name="Ma J."/>
            <person name="Kohara Y."/>
            <person name="Sharp S."/>
            <person name="Simmonds M.N."/>
            <person name="Spiegler S."/>
            <person name="Tivey A."/>
            <person name="Sugano S."/>
            <person name="White B."/>
            <person name="Walker D."/>
            <person name="Woodward J.R."/>
            <person name="Winckler T."/>
            <person name="Tanaka Y."/>
            <person name="Shaulsky G."/>
            <person name="Schleicher M."/>
            <person name="Weinstock G.M."/>
            <person name="Rosenthal A."/>
            <person name="Cox E.C."/>
            <person name="Chisholm R.L."/>
            <person name="Gibbs R.A."/>
            <person name="Loomis W.F."/>
            <person name="Platzer M."/>
            <person name="Kay R.R."/>
            <person name="Williams J.G."/>
            <person name="Dear P.H."/>
            <person name="Noegel A.A."/>
            <person name="Barrell B.G."/>
            <person name="Kuspa A."/>
        </authorList>
    </citation>
    <scope>NUCLEOTIDE SEQUENCE [LARGE SCALE GENOMIC DNA]</scope>
    <source>
        <strain>AX4</strain>
    </source>
</reference>
<reference key="2">
    <citation type="journal article" date="2003" name="Eukaryot. Cell">
        <title>MFE1, a member of the peroxisomal hydroxyacyl coenzyme A dehydrogenase family, affects fatty acid metabolism necessary for morphogenesis in Dictyostelium spp.</title>
        <authorList>
            <person name="Matsuoka S."/>
            <person name="Saito T."/>
            <person name="Kuwayama H."/>
            <person name="Morita N."/>
            <person name="Ochiai H."/>
            <person name="Maeda M."/>
        </authorList>
    </citation>
    <scope>NUCLEOTIDE SEQUENCE [MRNA] OF 80-294</scope>
    <source>
        <strain>AX4</strain>
    </source>
</reference>
<dbReference type="EC" id="4.2.1.119"/>
<dbReference type="EMBL" id="AAFI02000023">
    <property type="protein sequence ID" value="EAL68128.1"/>
    <property type="molecule type" value="Genomic_DNA"/>
</dbReference>
<dbReference type="EMBL" id="AB100096">
    <property type="protein sequence ID" value="BAC55274.1"/>
    <property type="molecule type" value="mRNA"/>
</dbReference>
<dbReference type="RefSeq" id="XP_642412.1">
    <property type="nucleotide sequence ID" value="XM_637320.1"/>
</dbReference>
<dbReference type="SMR" id="Q54XZ0"/>
<dbReference type="FunCoup" id="Q54XZ0">
    <property type="interactions" value="138"/>
</dbReference>
<dbReference type="STRING" id="44689.Q54XZ0"/>
<dbReference type="PaxDb" id="44689-DDB0214811"/>
<dbReference type="EnsemblProtists" id="EAL68128">
    <property type="protein sequence ID" value="EAL68128"/>
    <property type="gene ID" value="DDB_G0277911"/>
</dbReference>
<dbReference type="GeneID" id="8621617"/>
<dbReference type="KEGG" id="ddi:DDB_G0277911"/>
<dbReference type="dictyBase" id="DDB_G0277911">
    <property type="gene designation" value="mfeB"/>
</dbReference>
<dbReference type="VEuPathDB" id="AmoebaDB:DDB_G0277911"/>
<dbReference type="eggNOG" id="KOG1206">
    <property type="taxonomic scope" value="Eukaryota"/>
</dbReference>
<dbReference type="HOGENOM" id="CLU_040078_1_0_1"/>
<dbReference type="InParanoid" id="Q54XZ0"/>
<dbReference type="OMA" id="FKHTDQE"/>
<dbReference type="PhylomeDB" id="Q54XZ0"/>
<dbReference type="Reactome" id="R-DDI-193368">
    <property type="pathway name" value="Synthesis of bile acids and bile salts via 7alpha-hydroxycholesterol"/>
</dbReference>
<dbReference type="Reactome" id="R-DDI-2046106">
    <property type="pathway name" value="alpha-linolenic acid (ALA) metabolism"/>
</dbReference>
<dbReference type="Reactome" id="R-DDI-389887">
    <property type="pathway name" value="Beta-oxidation of pristanoyl-CoA"/>
</dbReference>
<dbReference type="Reactome" id="R-DDI-390247">
    <property type="pathway name" value="Beta-oxidation of very long chain fatty acids"/>
</dbReference>
<dbReference type="Reactome" id="R-DDI-9033241">
    <property type="pathway name" value="Peroxisomal protein import"/>
</dbReference>
<dbReference type="PRO" id="PR:Q54XZ0"/>
<dbReference type="Proteomes" id="UP000002195">
    <property type="component" value="Chromosome 3"/>
</dbReference>
<dbReference type="GO" id="GO:0005777">
    <property type="term" value="C:peroxisome"/>
    <property type="evidence" value="ECO:0000318"/>
    <property type="project" value="GO_Central"/>
</dbReference>
<dbReference type="GO" id="GO:0045335">
    <property type="term" value="C:phagocytic vesicle"/>
    <property type="evidence" value="ECO:0007005"/>
    <property type="project" value="dictyBase"/>
</dbReference>
<dbReference type="GO" id="GO:0044594">
    <property type="term" value="F:17-beta-hydroxysteroid dehydrogenase (NAD+) activity"/>
    <property type="evidence" value="ECO:0000318"/>
    <property type="project" value="GO_Central"/>
</dbReference>
<dbReference type="GO" id="GO:0003857">
    <property type="term" value="F:3-hydroxyacyl-CoA dehydrogenase activity"/>
    <property type="evidence" value="ECO:0000318"/>
    <property type="project" value="GO_Central"/>
</dbReference>
<dbReference type="GO" id="GO:0004300">
    <property type="term" value="F:enoyl-CoA hydratase activity"/>
    <property type="evidence" value="ECO:0000318"/>
    <property type="project" value="GO_Central"/>
</dbReference>
<dbReference type="GO" id="GO:0006635">
    <property type="term" value="P:fatty acid beta-oxidation"/>
    <property type="evidence" value="ECO:0000318"/>
    <property type="project" value="GO_Central"/>
</dbReference>
<dbReference type="CDD" id="cd03448">
    <property type="entry name" value="HDE_HSD"/>
    <property type="match status" value="1"/>
</dbReference>
<dbReference type="FunFam" id="3.10.129.10:FF:000013">
    <property type="entry name" value="Peroxisomal multifunctional enzyme type 2"/>
    <property type="match status" value="1"/>
</dbReference>
<dbReference type="Gene3D" id="3.10.129.10">
    <property type="entry name" value="Hotdog Thioesterase"/>
    <property type="match status" value="2"/>
</dbReference>
<dbReference type="InterPro" id="IPR029069">
    <property type="entry name" value="HotDog_dom_sf"/>
</dbReference>
<dbReference type="InterPro" id="IPR002539">
    <property type="entry name" value="MaoC-like_dom"/>
</dbReference>
<dbReference type="InterPro" id="IPR054357">
    <property type="entry name" value="MFE-2_N"/>
</dbReference>
<dbReference type="PANTHER" id="PTHR13078:SF56">
    <property type="entry name" value="PEROXISOMAL MULTIFUNCTIONAL ENZYME TYPE 2"/>
    <property type="match status" value="1"/>
</dbReference>
<dbReference type="PANTHER" id="PTHR13078">
    <property type="entry name" value="PEROXISOMAL MULTIFUNCTIONAL ENZYME TYPE 2-RELATED"/>
    <property type="match status" value="1"/>
</dbReference>
<dbReference type="Pfam" id="PF01575">
    <property type="entry name" value="MaoC_dehydratas"/>
    <property type="match status" value="1"/>
</dbReference>
<dbReference type="Pfam" id="PF22622">
    <property type="entry name" value="MFE-2_hydrat-2_N"/>
    <property type="match status" value="1"/>
</dbReference>
<dbReference type="SUPFAM" id="SSF54637">
    <property type="entry name" value="Thioesterase/thiol ester dehydrase-isomerase"/>
    <property type="match status" value="2"/>
</dbReference>
<accession>Q54XZ0</accession>
<accession>Q86SA5</accession>
<comment type="catalytic activity">
    <reaction>
        <text>a (3R)-3-hydroxyacyl-CoA = a (2E)-enoyl-CoA + H2O</text>
        <dbReference type="Rhea" id="RHEA:26526"/>
        <dbReference type="ChEBI" id="CHEBI:15377"/>
        <dbReference type="ChEBI" id="CHEBI:57319"/>
        <dbReference type="ChEBI" id="CHEBI:58856"/>
        <dbReference type="EC" id="4.2.1.119"/>
    </reaction>
</comment>
<comment type="subcellular location">
    <subcellularLocation>
        <location evidence="3">Peroxisome</location>
    </subcellularLocation>
</comment>
<comment type="similarity">
    <text evidence="3">Belongs to the short-chain dehydrogenases/reductases (SDR) family.</text>
</comment>
<gene>
    <name type="primary">mfeB</name>
    <name type="synonym">mfe2</name>
    <name type="ORF">DDB_G0277911</name>
</gene>
<sequence length="294" mass="32396">MTVDVKKVINHKIKPIEYNLTRKDVALYAISLGCGKKHLKFVYEGSDNFSALPTLGVIFPGQMIVDVISEGIDGIEFDPMMLLHGEQELEILNEIPVEGVFVTESKITNLYDKGKGALLILQCITSEKSSGKPIFKNIFSFFIRGIGGFGGDRGPNEKPIQIPKDRAPDAISKQATSEDQAVIYRLAGGDLNPLHIDPEMSKIGGFEVPILHGLCTYGIASRGVLEHFCDNDPSRLKSIKTRFTKHVYPGETIETEMWKINPTTILFQSKTNRDGSYVLSSGVAIIEPIKKGSL</sequence>
<name>MFEB_DICDI</name>
<feature type="chain" id="PRO_0000328621" description="Probable enoyl-CoA hydratase 2">
    <location>
        <begin position="1"/>
        <end position="294"/>
    </location>
</feature>
<feature type="domain" description="MaoC-like">
    <location>
        <begin position="165"/>
        <end position="269"/>
    </location>
</feature>
<feature type="short sequence motif" description="Microbody targeting signal" evidence="2">
    <location>
        <begin position="292"/>
        <end position="294"/>
    </location>
</feature>
<feature type="binding site" evidence="1">
    <location>
        <begin position="84"/>
        <end position="85"/>
    </location>
    <ligand>
        <name>(3R)-3-hydroxydecanoyl-CoA</name>
        <dbReference type="ChEBI" id="CHEBI:74272"/>
    </ligand>
</feature>
<feature type="binding site" evidence="1">
    <location>
        <position position="113"/>
    </location>
    <ligand>
        <name>(3R)-3-hydroxydecanoyl-CoA</name>
        <dbReference type="ChEBI" id="CHEBI:74272"/>
    </ligand>
</feature>
<feature type="binding site" evidence="1">
    <location>
        <begin position="190"/>
        <end position="195"/>
    </location>
    <ligand>
        <name>(3R)-3-hydroxydecanoyl-CoA</name>
        <dbReference type="ChEBI" id="CHEBI:74272"/>
    </ligand>
</feature>
<feature type="binding site" evidence="1">
    <location>
        <position position="213"/>
    </location>
    <ligand>
        <name>(3R)-3-hydroxydecanoyl-CoA</name>
        <dbReference type="ChEBI" id="CHEBI:74272"/>
    </ligand>
</feature>
<feature type="binding site" evidence="1">
    <location>
        <position position="243"/>
    </location>
    <ligand>
        <name>(3R)-3-hydroxydecanoyl-CoA</name>
        <dbReference type="ChEBI" id="CHEBI:74272"/>
    </ligand>
</feature>
<protein>
    <recommendedName>
        <fullName>Probable enoyl-CoA hydratase 2</fullName>
        <ecNumber>4.2.1.119</ecNumber>
    </recommendedName>
    <alternativeName>
        <fullName>MFE-2</fullName>
    </alternativeName>
    <alternativeName>
        <fullName>Multifunctional enzyme B</fullName>
        <shortName>MFE-B</shortName>
    </alternativeName>
</protein>
<evidence type="ECO:0000250" key="1"/>
<evidence type="ECO:0000255" key="2"/>
<evidence type="ECO:0000305" key="3"/>
<organism>
    <name type="scientific">Dictyostelium discoideum</name>
    <name type="common">Social amoeba</name>
    <dbReference type="NCBI Taxonomy" id="44689"/>
    <lineage>
        <taxon>Eukaryota</taxon>
        <taxon>Amoebozoa</taxon>
        <taxon>Evosea</taxon>
        <taxon>Eumycetozoa</taxon>
        <taxon>Dictyostelia</taxon>
        <taxon>Dictyosteliales</taxon>
        <taxon>Dictyosteliaceae</taxon>
        <taxon>Dictyostelium</taxon>
    </lineage>
</organism>